<keyword id="KW-0997">Cell inner membrane</keyword>
<keyword id="KW-1003">Cell membrane</keyword>
<keyword id="KW-0175">Coiled coil</keyword>
<keyword id="KW-0963">Cytoplasm</keyword>
<keyword id="KW-0472">Membrane</keyword>
<sequence>MAKNYYDITLALSGICQSARLVQQLAHQGHCDADALHVSLNSVIDMNPSSTLGVFGGSEANLRLGLETLLGVLNASSRQGLNAELTRYTLSLMVLERKLSSAKGALNTLGDRINGLQRQLDHFDLQSDTLMSAMAGIYVDVISPLGPRIQVTGSPAVLQSPQVQAKVRASLLAGIRAAVLWHQVGGGRLQLMFSRHRLTTQAKQILAYLTPEL</sequence>
<reference key="1">
    <citation type="journal article" date="2001" name="Nature">
        <title>Complete genome sequence of a multiple drug resistant Salmonella enterica serovar Typhi CT18.</title>
        <authorList>
            <person name="Parkhill J."/>
            <person name="Dougan G."/>
            <person name="James K.D."/>
            <person name="Thomson N.R."/>
            <person name="Pickard D."/>
            <person name="Wain J."/>
            <person name="Churcher C.M."/>
            <person name="Mungall K.L."/>
            <person name="Bentley S.D."/>
            <person name="Holden M.T.G."/>
            <person name="Sebaihia M."/>
            <person name="Baker S."/>
            <person name="Basham D."/>
            <person name="Brooks K."/>
            <person name="Chillingworth T."/>
            <person name="Connerton P."/>
            <person name="Cronin A."/>
            <person name="Davis P."/>
            <person name="Davies R.M."/>
            <person name="Dowd L."/>
            <person name="White N."/>
            <person name="Farrar J."/>
            <person name="Feltwell T."/>
            <person name="Hamlin N."/>
            <person name="Haque A."/>
            <person name="Hien T.T."/>
            <person name="Holroyd S."/>
            <person name="Jagels K."/>
            <person name="Krogh A."/>
            <person name="Larsen T.S."/>
            <person name="Leather S."/>
            <person name="Moule S."/>
            <person name="O'Gaora P."/>
            <person name="Parry C."/>
            <person name="Quail M.A."/>
            <person name="Rutherford K.M."/>
            <person name="Simmonds M."/>
            <person name="Skelton J."/>
            <person name="Stevens K."/>
            <person name="Whitehead S."/>
            <person name="Barrell B.G."/>
        </authorList>
    </citation>
    <scope>NUCLEOTIDE SEQUENCE [LARGE SCALE GENOMIC DNA]</scope>
    <source>
        <strain>CT18</strain>
    </source>
</reference>
<reference key="2">
    <citation type="journal article" date="2003" name="J. Bacteriol.">
        <title>Comparative genomics of Salmonella enterica serovar Typhi strains Ty2 and CT18.</title>
        <authorList>
            <person name="Deng W."/>
            <person name="Liou S.-R."/>
            <person name="Plunkett G. III"/>
            <person name="Mayhew G.F."/>
            <person name="Rose D.J."/>
            <person name="Burland V."/>
            <person name="Kodoyianni V."/>
            <person name="Schwartz D.C."/>
            <person name="Blattner F.R."/>
        </authorList>
    </citation>
    <scope>NUCLEOTIDE SEQUENCE [LARGE SCALE GENOMIC DNA]</scope>
    <source>
        <strain>ATCC 700931 / Ty2</strain>
    </source>
</reference>
<gene>
    <name evidence="1" type="primary">hflD</name>
    <name type="ordered locus">STY1273</name>
    <name type="ordered locus">t1687</name>
</gene>
<dbReference type="EMBL" id="AL513382">
    <property type="protein sequence ID" value="CAD08357.1"/>
    <property type="status" value="ALT_INIT"/>
    <property type="molecule type" value="Genomic_DNA"/>
</dbReference>
<dbReference type="EMBL" id="AE014613">
    <property type="protein sequence ID" value="AAO69312.1"/>
    <property type="status" value="ALT_INIT"/>
    <property type="molecule type" value="Genomic_DNA"/>
</dbReference>
<dbReference type="RefSeq" id="NP_455725.1">
    <property type="nucleotide sequence ID" value="NC_003198.1"/>
</dbReference>
<dbReference type="RefSeq" id="WP_024131182.1">
    <property type="nucleotide sequence ID" value="NZ_WSUR01000030.1"/>
</dbReference>
<dbReference type="SMR" id="Q8Z7H0"/>
<dbReference type="STRING" id="220341.gene:17585237"/>
<dbReference type="KEGG" id="stt:t1687"/>
<dbReference type="KEGG" id="sty:STY1273"/>
<dbReference type="PATRIC" id="fig|220341.7.peg.1278"/>
<dbReference type="eggNOG" id="COG2915">
    <property type="taxonomic scope" value="Bacteria"/>
</dbReference>
<dbReference type="HOGENOM" id="CLU_098920_0_0_6"/>
<dbReference type="OMA" id="RYIISLM"/>
<dbReference type="OrthoDB" id="9788031at2"/>
<dbReference type="Proteomes" id="UP000000541">
    <property type="component" value="Chromosome"/>
</dbReference>
<dbReference type="Proteomes" id="UP000002670">
    <property type="component" value="Chromosome"/>
</dbReference>
<dbReference type="GO" id="GO:0005737">
    <property type="term" value="C:cytoplasm"/>
    <property type="evidence" value="ECO:0007669"/>
    <property type="project" value="UniProtKB-SubCell"/>
</dbReference>
<dbReference type="GO" id="GO:0005886">
    <property type="term" value="C:plasma membrane"/>
    <property type="evidence" value="ECO:0007669"/>
    <property type="project" value="UniProtKB-SubCell"/>
</dbReference>
<dbReference type="FunFam" id="1.10.3890.10:FF:000001">
    <property type="entry name" value="High frequency lysogenization protein HflD homolog"/>
    <property type="match status" value="1"/>
</dbReference>
<dbReference type="Gene3D" id="1.10.3890.10">
    <property type="entry name" value="HflD-like"/>
    <property type="match status" value="1"/>
</dbReference>
<dbReference type="HAMAP" id="MF_00695">
    <property type="entry name" value="HflD_protein"/>
    <property type="match status" value="1"/>
</dbReference>
<dbReference type="InterPro" id="IPR007451">
    <property type="entry name" value="HflD"/>
</dbReference>
<dbReference type="InterPro" id="IPR035932">
    <property type="entry name" value="HflD-like_sf"/>
</dbReference>
<dbReference type="NCBIfam" id="NF001245">
    <property type="entry name" value="PRK00218.1-1"/>
    <property type="match status" value="1"/>
</dbReference>
<dbReference type="NCBIfam" id="NF001246">
    <property type="entry name" value="PRK00218.1-2"/>
    <property type="match status" value="1"/>
</dbReference>
<dbReference type="NCBIfam" id="NF001248">
    <property type="entry name" value="PRK00218.1-4"/>
    <property type="match status" value="1"/>
</dbReference>
<dbReference type="NCBIfam" id="NF001249">
    <property type="entry name" value="PRK00218.1-5"/>
    <property type="match status" value="1"/>
</dbReference>
<dbReference type="PANTHER" id="PTHR38100">
    <property type="entry name" value="HIGH FREQUENCY LYSOGENIZATION PROTEIN HFLD"/>
    <property type="match status" value="1"/>
</dbReference>
<dbReference type="PANTHER" id="PTHR38100:SF1">
    <property type="entry name" value="HIGH FREQUENCY LYSOGENIZATION PROTEIN HFLD"/>
    <property type="match status" value="1"/>
</dbReference>
<dbReference type="Pfam" id="PF04356">
    <property type="entry name" value="DUF489"/>
    <property type="match status" value="1"/>
</dbReference>
<dbReference type="SUPFAM" id="SSF101322">
    <property type="entry name" value="YcfC-like"/>
    <property type="match status" value="1"/>
</dbReference>
<evidence type="ECO:0000255" key="1">
    <source>
        <dbReference type="HAMAP-Rule" id="MF_00695"/>
    </source>
</evidence>
<evidence type="ECO:0000305" key="2"/>
<accession>Q8Z7H0</accession>
<protein>
    <recommendedName>
        <fullName evidence="1">High frequency lysogenization protein HflD homolog</fullName>
    </recommendedName>
</protein>
<name>HFLD_SALTI</name>
<comment type="subcellular location">
    <subcellularLocation>
        <location>Cytoplasm</location>
    </subcellularLocation>
    <subcellularLocation>
        <location evidence="1">Cell inner membrane</location>
        <topology evidence="1">Peripheral membrane protein</topology>
        <orientation evidence="1">Cytoplasmic side</orientation>
    </subcellularLocation>
</comment>
<comment type="similarity">
    <text evidence="1">Belongs to the HflD family.</text>
</comment>
<comment type="sequence caution" evidence="2">
    <conflict type="erroneous initiation">
        <sequence resource="EMBL-CDS" id="AAO69312"/>
    </conflict>
</comment>
<comment type="sequence caution" evidence="2">
    <conflict type="erroneous initiation">
        <sequence resource="EMBL-CDS" id="CAD08357"/>
    </conflict>
</comment>
<organism>
    <name type="scientific">Salmonella typhi</name>
    <dbReference type="NCBI Taxonomy" id="90370"/>
    <lineage>
        <taxon>Bacteria</taxon>
        <taxon>Pseudomonadati</taxon>
        <taxon>Pseudomonadota</taxon>
        <taxon>Gammaproteobacteria</taxon>
        <taxon>Enterobacterales</taxon>
        <taxon>Enterobacteriaceae</taxon>
        <taxon>Salmonella</taxon>
    </lineage>
</organism>
<feature type="chain" id="PRO_0000071586" description="High frequency lysogenization protein HflD homolog">
    <location>
        <begin position="1"/>
        <end position="213"/>
    </location>
</feature>
<feature type="coiled-coil region" evidence="1">
    <location>
        <begin position="79"/>
        <end position="122"/>
    </location>
</feature>
<proteinExistence type="inferred from homology"/>